<sequence length="92" mass="10575">MARSIKKGPFVDNHLMKKVEAQEGNQKKTVIKTWSRRSTIFPNFIGITFAVYDGRKHVPVYVTEDMVGHKLGEFAPTRTFKGHAVDDKKTRR</sequence>
<dbReference type="EMBL" id="AM295250">
    <property type="protein sequence ID" value="CAL28637.1"/>
    <property type="molecule type" value="Genomic_DNA"/>
</dbReference>
<dbReference type="RefSeq" id="WP_015900973.1">
    <property type="nucleotide sequence ID" value="NC_012121.1"/>
</dbReference>
<dbReference type="SMR" id="B9DM27"/>
<dbReference type="GeneID" id="93794190"/>
<dbReference type="KEGG" id="sca:SCA_1731"/>
<dbReference type="eggNOG" id="COG0185">
    <property type="taxonomic scope" value="Bacteria"/>
</dbReference>
<dbReference type="HOGENOM" id="CLU_144911_0_1_9"/>
<dbReference type="OrthoDB" id="9797833at2"/>
<dbReference type="BioCyc" id="SCAR396513:SCA_RS08820-MONOMER"/>
<dbReference type="Proteomes" id="UP000000444">
    <property type="component" value="Chromosome"/>
</dbReference>
<dbReference type="GO" id="GO:0005737">
    <property type="term" value="C:cytoplasm"/>
    <property type="evidence" value="ECO:0007669"/>
    <property type="project" value="UniProtKB-ARBA"/>
</dbReference>
<dbReference type="GO" id="GO:0015935">
    <property type="term" value="C:small ribosomal subunit"/>
    <property type="evidence" value="ECO:0007669"/>
    <property type="project" value="InterPro"/>
</dbReference>
<dbReference type="GO" id="GO:0019843">
    <property type="term" value="F:rRNA binding"/>
    <property type="evidence" value="ECO:0007669"/>
    <property type="project" value="UniProtKB-UniRule"/>
</dbReference>
<dbReference type="GO" id="GO:0003735">
    <property type="term" value="F:structural constituent of ribosome"/>
    <property type="evidence" value="ECO:0007669"/>
    <property type="project" value="InterPro"/>
</dbReference>
<dbReference type="GO" id="GO:0000028">
    <property type="term" value="P:ribosomal small subunit assembly"/>
    <property type="evidence" value="ECO:0007669"/>
    <property type="project" value="TreeGrafter"/>
</dbReference>
<dbReference type="GO" id="GO:0006412">
    <property type="term" value="P:translation"/>
    <property type="evidence" value="ECO:0007669"/>
    <property type="project" value="UniProtKB-UniRule"/>
</dbReference>
<dbReference type="FunFam" id="3.30.860.10:FF:000001">
    <property type="entry name" value="30S ribosomal protein S19"/>
    <property type="match status" value="1"/>
</dbReference>
<dbReference type="Gene3D" id="3.30.860.10">
    <property type="entry name" value="30s Ribosomal Protein S19, Chain A"/>
    <property type="match status" value="1"/>
</dbReference>
<dbReference type="HAMAP" id="MF_00531">
    <property type="entry name" value="Ribosomal_uS19"/>
    <property type="match status" value="1"/>
</dbReference>
<dbReference type="InterPro" id="IPR002222">
    <property type="entry name" value="Ribosomal_uS19"/>
</dbReference>
<dbReference type="InterPro" id="IPR005732">
    <property type="entry name" value="Ribosomal_uS19_bac-type"/>
</dbReference>
<dbReference type="InterPro" id="IPR020934">
    <property type="entry name" value="Ribosomal_uS19_CS"/>
</dbReference>
<dbReference type="InterPro" id="IPR023575">
    <property type="entry name" value="Ribosomal_uS19_SF"/>
</dbReference>
<dbReference type="NCBIfam" id="TIGR01050">
    <property type="entry name" value="rpsS_bact"/>
    <property type="match status" value="1"/>
</dbReference>
<dbReference type="PANTHER" id="PTHR11880">
    <property type="entry name" value="RIBOSOMAL PROTEIN S19P FAMILY MEMBER"/>
    <property type="match status" value="1"/>
</dbReference>
<dbReference type="PANTHER" id="PTHR11880:SF8">
    <property type="entry name" value="SMALL RIBOSOMAL SUBUNIT PROTEIN US19M"/>
    <property type="match status" value="1"/>
</dbReference>
<dbReference type="Pfam" id="PF00203">
    <property type="entry name" value="Ribosomal_S19"/>
    <property type="match status" value="1"/>
</dbReference>
<dbReference type="PIRSF" id="PIRSF002144">
    <property type="entry name" value="Ribosomal_S19"/>
    <property type="match status" value="1"/>
</dbReference>
<dbReference type="PRINTS" id="PR00975">
    <property type="entry name" value="RIBOSOMALS19"/>
</dbReference>
<dbReference type="SUPFAM" id="SSF54570">
    <property type="entry name" value="Ribosomal protein S19"/>
    <property type="match status" value="1"/>
</dbReference>
<dbReference type="PROSITE" id="PS00323">
    <property type="entry name" value="RIBOSOMAL_S19"/>
    <property type="match status" value="1"/>
</dbReference>
<proteinExistence type="inferred from homology"/>
<reference key="1">
    <citation type="journal article" date="2009" name="Appl. Environ. Microbiol.">
        <title>Genome analysis of the meat starter culture bacterium Staphylococcus carnosus TM300.</title>
        <authorList>
            <person name="Rosenstein R."/>
            <person name="Nerz C."/>
            <person name="Biswas L."/>
            <person name="Resch A."/>
            <person name="Raddatz G."/>
            <person name="Schuster S.C."/>
            <person name="Goetz F."/>
        </authorList>
    </citation>
    <scope>NUCLEOTIDE SEQUENCE [LARGE SCALE GENOMIC DNA]</scope>
    <source>
        <strain>TM300</strain>
    </source>
</reference>
<protein>
    <recommendedName>
        <fullName evidence="1">Small ribosomal subunit protein uS19</fullName>
    </recommendedName>
    <alternativeName>
        <fullName evidence="2">30S ribosomal protein S19</fullName>
    </alternativeName>
</protein>
<evidence type="ECO:0000255" key="1">
    <source>
        <dbReference type="HAMAP-Rule" id="MF_00531"/>
    </source>
</evidence>
<evidence type="ECO:0000305" key="2"/>
<keyword id="KW-1185">Reference proteome</keyword>
<keyword id="KW-0687">Ribonucleoprotein</keyword>
<keyword id="KW-0689">Ribosomal protein</keyword>
<keyword id="KW-0694">RNA-binding</keyword>
<keyword id="KW-0699">rRNA-binding</keyword>
<comment type="function">
    <text evidence="1">Protein S19 forms a complex with S13 that binds strongly to the 16S ribosomal RNA.</text>
</comment>
<comment type="similarity">
    <text evidence="1">Belongs to the universal ribosomal protein uS19 family.</text>
</comment>
<accession>B9DM27</accession>
<name>RS19_STACT</name>
<gene>
    <name evidence="1" type="primary">rpsS</name>
    <name type="ordered locus">Sca_1731</name>
</gene>
<organism>
    <name type="scientific">Staphylococcus carnosus (strain TM300)</name>
    <dbReference type="NCBI Taxonomy" id="396513"/>
    <lineage>
        <taxon>Bacteria</taxon>
        <taxon>Bacillati</taxon>
        <taxon>Bacillota</taxon>
        <taxon>Bacilli</taxon>
        <taxon>Bacillales</taxon>
        <taxon>Staphylococcaceae</taxon>
        <taxon>Staphylococcus</taxon>
    </lineage>
</organism>
<feature type="chain" id="PRO_1000146412" description="Small ribosomal subunit protein uS19">
    <location>
        <begin position="1"/>
        <end position="92"/>
    </location>
</feature>